<sequence length="417" mass="49345">MKFTELTVKEFENFVQNPSLESHYFQVKENIATRESDGFQVVLLGVKDDDNRVIAASLFSKIPTMGSYVYYSNRGPVMDYSDLGLVDFYLKELDKYLHQHQCLYVKLDPYWLYQVYDKDINPLTEKNDALVNLFKSHGYDHHGFTTQYDSSSQVRWMGVLDLEGKTPASLRKEFDSQRKRNINKAINYGVKVRFLSKDEFDLFLDLYRETEARTGFASKTDDYFYNFIEHYGDKVLVPLAYIDLNEYIQHLQESLNDKENRRDDMMAKENKTDKQLKKIAELDKQIDHDKKELLQASELRQTDGEILNLASGVYFANAYEVNYFSGGSSEKYNQYMGPYAMHWHMINYCFDNGYDRYNFYGLSGDFTENSEDYGVYRFKRGFNVRIEELIGDFYKPINKVKYWLFNTLDRIRNKLKK</sequence>
<accession>Q5HPG5</accession>
<name>FEMB_STAEQ</name>
<proteinExistence type="inferred from homology"/>
<protein>
    <recommendedName>
        <fullName>Aminoacyltransferase FemB</fullName>
        <ecNumber>2.3.2.18</ecNumber>
    </recommendedName>
    <alternativeName>
        <fullName>Factor essential for expression of methicillin resistance B</fullName>
    </alternativeName>
    <alternativeName>
        <fullName>N-acetylmuramoyl-L-alanyl-D-glutamyl-L-lysyl-(N6-triglycine)-D-alanyl-D-alanine-diphosphoundecaprenyl-N-acetylglucosamine:glycine glycyltransferase</fullName>
    </alternativeName>
</protein>
<feature type="chain" id="PRO_0000204746" description="Aminoacyltransferase FemB">
    <location>
        <begin position="1"/>
        <end position="417"/>
    </location>
</feature>
<dbReference type="EC" id="2.3.2.18"/>
<dbReference type="EMBL" id="CP000029">
    <property type="protein sequence ID" value="AAW54350.1"/>
    <property type="molecule type" value="Genomic_DNA"/>
</dbReference>
<dbReference type="RefSeq" id="WP_002439665.1">
    <property type="nucleotide sequence ID" value="NC_002976.3"/>
</dbReference>
<dbReference type="SMR" id="Q5HPG5"/>
<dbReference type="STRING" id="176279.SERP0947"/>
<dbReference type="KEGG" id="ser:SERP0947"/>
<dbReference type="eggNOG" id="COG2348">
    <property type="taxonomic scope" value="Bacteria"/>
</dbReference>
<dbReference type="HOGENOM" id="CLU_048411_1_0_9"/>
<dbReference type="Proteomes" id="UP000000531">
    <property type="component" value="Chromosome"/>
</dbReference>
<dbReference type="GO" id="GO:0005737">
    <property type="term" value="C:cytoplasm"/>
    <property type="evidence" value="ECO:0007669"/>
    <property type="project" value="UniProtKB-SubCell"/>
</dbReference>
<dbReference type="GO" id="GO:0016755">
    <property type="term" value="F:aminoacyltransferase activity"/>
    <property type="evidence" value="ECO:0007669"/>
    <property type="project" value="InterPro"/>
</dbReference>
<dbReference type="GO" id="GO:0071555">
    <property type="term" value="P:cell wall organization"/>
    <property type="evidence" value="ECO:0007669"/>
    <property type="project" value="UniProtKB-KW"/>
</dbReference>
<dbReference type="GO" id="GO:0009252">
    <property type="term" value="P:peptidoglycan biosynthetic process"/>
    <property type="evidence" value="ECO:0007669"/>
    <property type="project" value="UniProtKB-KW"/>
</dbReference>
<dbReference type="GO" id="GO:0008360">
    <property type="term" value="P:regulation of cell shape"/>
    <property type="evidence" value="ECO:0007669"/>
    <property type="project" value="UniProtKB-KW"/>
</dbReference>
<dbReference type="Gene3D" id="1.20.58.90">
    <property type="match status" value="1"/>
</dbReference>
<dbReference type="Gene3D" id="3.40.630.30">
    <property type="match status" value="2"/>
</dbReference>
<dbReference type="InterPro" id="IPR016181">
    <property type="entry name" value="Acyl_CoA_acyltransferase"/>
</dbReference>
<dbReference type="InterPro" id="IPR003447">
    <property type="entry name" value="FEMABX"/>
</dbReference>
<dbReference type="InterPro" id="IPR050644">
    <property type="entry name" value="PG_Glycine_Bridge_Synth"/>
</dbReference>
<dbReference type="PANTHER" id="PTHR36174:SF2">
    <property type="entry name" value="AMINOACYLTRANSFERASE FEMA"/>
    <property type="match status" value="1"/>
</dbReference>
<dbReference type="PANTHER" id="PTHR36174">
    <property type="entry name" value="LIPID II:GLYCINE GLYCYLTRANSFERASE"/>
    <property type="match status" value="1"/>
</dbReference>
<dbReference type="Pfam" id="PF02388">
    <property type="entry name" value="FemAB"/>
    <property type="match status" value="1"/>
</dbReference>
<dbReference type="SUPFAM" id="SSF55729">
    <property type="entry name" value="Acyl-CoA N-acyltransferases (Nat)"/>
    <property type="match status" value="2"/>
</dbReference>
<dbReference type="PROSITE" id="PS51191">
    <property type="entry name" value="FEMABX"/>
    <property type="match status" value="1"/>
</dbReference>
<gene>
    <name type="primary">femB</name>
    <name type="ordered locus">SERP0947</name>
</gene>
<keyword id="KW-0012">Acyltransferase</keyword>
<keyword id="KW-0133">Cell shape</keyword>
<keyword id="KW-0961">Cell wall biogenesis/degradation</keyword>
<keyword id="KW-0963">Cytoplasm</keyword>
<keyword id="KW-0573">Peptidoglycan synthesis</keyword>
<keyword id="KW-1185">Reference proteome</keyword>
<keyword id="KW-0808">Transferase</keyword>
<evidence type="ECO:0000250" key="1"/>
<evidence type="ECO:0000305" key="2"/>
<comment type="function">
    <text evidence="1">Catalyzes the incorporation of amino acid(s) into the interchain peptide bridge of peptidoglycan, using aminoacyl-tRNA as amino acid donor.</text>
</comment>
<comment type="catalytic activity">
    <reaction>
        <text>MurNAc-L-Ala-D-isoglutaminyl-L-Lys-(N(6)-tri-Gly)-D-Ala-D-Ala-diphospho-di-trans,octa-cis-undecaprenyl-GlcNAc + 2 glycyl-tRNA(Gly) = MurNAc-L-Ala-D-isoglutaminyl-L-Lys-(N(6)-penta-Gly)-D-Ala-D-Ala-diphospho-di-trans,octa-cis-undecaprenyl-GlcNAc + 2 tRNA(Gly) + 2 H(+)</text>
        <dbReference type="Rhea" id="RHEA:30443"/>
        <dbReference type="Rhea" id="RHEA-COMP:9664"/>
        <dbReference type="Rhea" id="RHEA-COMP:9683"/>
        <dbReference type="ChEBI" id="CHEBI:15378"/>
        <dbReference type="ChEBI" id="CHEBI:62235"/>
        <dbReference type="ChEBI" id="CHEBI:62236"/>
        <dbReference type="ChEBI" id="CHEBI:78442"/>
        <dbReference type="ChEBI" id="CHEBI:78522"/>
        <dbReference type="EC" id="2.3.2.18"/>
    </reaction>
</comment>
<comment type="subcellular location">
    <subcellularLocation>
        <location evidence="1">Cytoplasm</location>
    </subcellularLocation>
</comment>
<comment type="similarity">
    <text evidence="2">Belongs to the FemABX family.</text>
</comment>
<reference key="1">
    <citation type="journal article" date="2005" name="J. Bacteriol.">
        <title>Insights on evolution of virulence and resistance from the complete genome analysis of an early methicillin-resistant Staphylococcus aureus strain and a biofilm-producing methicillin-resistant Staphylococcus epidermidis strain.</title>
        <authorList>
            <person name="Gill S.R."/>
            <person name="Fouts D.E."/>
            <person name="Archer G.L."/>
            <person name="Mongodin E.F."/>
            <person name="DeBoy R.T."/>
            <person name="Ravel J."/>
            <person name="Paulsen I.T."/>
            <person name="Kolonay J.F."/>
            <person name="Brinkac L.M."/>
            <person name="Beanan M.J."/>
            <person name="Dodson R.J."/>
            <person name="Daugherty S.C."/>
            <person name="Madupu R."/>
            <person name="Angiuoli S.V."/>
            <person name="Durkin A.S."/>
            <person name="Haft D.H."/>
            <person name="Vamathevan J.J."/>
            <person name="Khouri H."/>
            <person name="Utterback T.R."/>
            <person name="Lee C."/>
            <person name="Dimitrov G."/>
            <person name="Jiang L."/>
            <person name="Qin H."/>
            <person name="Weidman J."/>
            <person name="Tran K."/>
            <person name="Kang K.H."/>
            <person name="Hance I.R."/>
            <person name="Nelson K.E."/>
            <person name="Fraser C.M."/>
        </authorList>
    </citation>
    <scope>NUCLEOTIDE SEQUENCE [LARGE SCALE GENOMIC DNA]</scope>
    <source>
        <strain>ATCC 35984 / DSM 28319 / BCRC 17069 / CCUG 31568 / BM 3577 / RP62A</strain>
    </source>
</reference>
<organism>
    <name type="scientific">Staphylococcus epidermidis (strain ATCC 35984 / DSM 28319 / BCRC 17069 / CCUG 31568 / BM 3577 / RP62A)</name>
    <dbReference type="NCBI Taxonomy" id="176279"/>
    <lineage>
        <taxon>Bacteria</taxon>
        <taxon>Bacillati</taxon>
        <taxon>Bacillota</taxon>
        <taxon>Bacilli</taxon>
        <taxon>Bacillales</taxon>
        <taxon>Staphylococcaceae</taxon>
        <taxon>Staphylococcus</taxon>
    </lineage>
</organism>